<name>MTOX_SALNS</name>
<keyword id="KW-0274">FAD</keyword>
<keyword id="KW-0285">Flavoprotein</keyword>
<keyword id="KW-0560">Oxidoreductase</keyword>
<dbReference type="EC" id="1.5.3.-" evidence="1"/>
<dbReference type="EMBL" id="CP001113">
    <property type="protein sequence ID" value="ACF62638.1"/>
    <property type="molecule type" value="Genomic_DNA"/>
</dbReference>
<dbReference type="RefSeq" id="WP_000872765.1">
    <property type="nucleotide sequence ID" value="NZ_CCMR01000003.1"/>
</dbReference>
<dbReference type="SMR" id="B4T2Z2"/>
<dbReference type="KEGG" id="see:SNSL254_A1257"/>
<dbReference type="HOGENOM" id="CLU_007884_2_1_6"/>
<dbReference type="Proteomes" id="UP000008824">
    <property type="component" value="Chromosome"/>
</dbReference>
<dbReference type="GO" id="GO:0005829">
    <property type="term" value="C:cytosol"/>
    <property type="evidence" value="ECO:0007669"/>
    <property type="project" value="TreeGrafter"/>
</dbReference>
<dbReference type="GO" id="GO:0050660">
    <property type="term" value="F:flavin adenine dinucleotide binding"/>
    <property type="evidence" value="ECO:0007669"/>
    <property type="project" value="InterPro"/>
</dbReference>
<dbReference type="GO" id="GO:0050131">
    <property type="term" value="F:N-methyl-L-amino-acid oxidase activity"/>
    <property type="evidence" value="ECO:0007669"/>
    <property type="project" value="InterPro"/>
</dbReference>
<dbReference type="GO" id="GO:0008115">
    <property type="term" value="F:sarcosine oxidase activity"/>
    <property type="evidence" value="ECO:0007669"/>
    <property type="project" value="TreeGrafter"/>
</dbReference>
<dbReference type="Gene3D" id="3.30.9.10">
    <property type="entry name" value="D-Amino Acid Oxidase, subunit A, domain 2"/>
    <property type="match status" value="1"/>
</dbReference>
<dbReference type="Gene3D" id="3.50.50.60">
    <property type="entry name" value="FAD/NAD(P)-binding domain"/>
    <property type="match status" value="1"/>
</dbReference>
<dbReference type="HAMAP" id="MF_00515">
    <property type="entry name" value="MTOX"/>
    <property type="match status" value="1"/>
</dbReference>
<dbReference type="InterPro" id="IPR006076">
    <property type="entry name" value="FAD-dep_OxRdtase"/>
</dbReference>
<dbReference type="InterPro" id="IPR036188">
    <property type="entry name" value="FAD/NAD-bd_sf"/>
</dbReference>
<dbReference type="InterPro" id="IPR023493">
    <property type="entry name" value="Me_Trp_Oxase_MTOX"/>
</dbReference>
<dbReference type="InterPro" id="IPR045170">
    <property type="entry name" value="MTOX"/>
</dbReference>
<dbReference type="NCBIfam" id="NF008425">
    <property type="entry name" value="PRK11259.1"/>
    <property type="match status" value="1"/>
</dbReference>
<dbReference type="PANTHER" id="PTHR10961:SF7">
    <property type="entry name" value="FAD DEPENDENT OXIDOREDUCTASE DOMAIN-CONTAINING PROTEIN"/>
    <property type="match status" value="1"/>
</dbReference>
<dbReference type="PANTHER" id="PTHR10961">
    <property type="entry name" value="PEROXISOMAL SARCOSINE OXIDASE"/>
    <property type="match status" value="1"/>
</dbReference>
<dbReference type="Pfam" id="PF01266">
    <property type="entry name" value="DAO"/>
    <property type="match status" value="1"/>
</dbReference>
<dbReference type="SUPFAM" id="SSF54373">
    <property type="entry name" value="FAD-linked reductases, C-terminal domain"/>
    <property type="match status" value="1"/>
</dbReference>
<dbReference type="SUPFAM" id="SSF51905">
    <property type="entry name" value="FAD/NAD(P)-binding domain"/>
    <property type="match status" value="1"/>
</dbReference>
<protein>
    <recommendedName>
        <fullName evidence="1">N-methyl-L-tryptophan oxidase</fullName>
        <shortName evidence="1">MTOX</shortName>
        <ecNumber evidence="1">1.5.3.-</ecNumber>
    </recommendedName>
</protein>
<gene>
    <name evidence="1" type="primary">solA</name>
    <name type="ordered locus">SNSL254_A1257</name>
</gene>
<proteinExistence type="inferred from homology"/>
<accession>B4T2Z2</accession>
<comment type="function">
    <text evidence="1">Catalyzes the oxidative demethylation of N-methyl-L-tryptophan.</text>
</comment>
<comment type="catalytic activity">
    <reaction evidence="1">
        <text>N(alpha)-methyl-L-tryptophan + O2 + H2O = L-tryptophan + formaldehyde + H2O2</text>
        <dbReference type="Rhea" id="RHEA:28006"/>
        <dbReference type="ChEBI" id="CHEBI:15377"/>
        <dbReference type="ChEBI" id="CHEBI:15379"/>
        <dbReference type="ChEBI" id="CHEBI:16240"/>
        <dbReference type="ChEBI" id="CHEBI:16842"/>
        <dbReference type="ChEBI" id="CHEBI:57283"/>
        <dbReference type="ChEBI" id="CHEBI:57912"/>
    </reaction>
</comment>
<comment type="cofactor">
    <cofactor evidence="1">
        <name>FAD</name>
        <dbReference type="ChEBI" id="CHEBI:57692"/>
    </cofactor>
    <text evidence="1">Binds 1 FAD per subunit.</text>
</comment>
<comment type="subunit">
    <text evidence="1">Monomer.</text>
</comment>
<comment type="similarity">
    <text evidence="1">Belongs to the MSOX/MTOX family. MTOX subfamily.</text>
</comment>
<sequence>MKYDLIIIGSGSVGAAAGYYATRAGLKVLMTDAHMPPHQQGSHHGDTRLIRHAYGEGEKYVPLVLRAQALWDELSTHNEEPIFVRSGVVNLGPADSAFLANVARSAQQWQLNVERLDATALMTRWPEIRVPDNYIGLFEADSGFLRSELAITTWLRLAREAGCAQLFNSPVSHIHHDDNGVTIETSEGCYHASKALISAGTWVKALVPELPVQPVRKVFAWFKADGRYSTKNRFPAFTGEMPNGDQYYGFPAENDELKIGKHNGGQLIQAQEERKPFAAVASDGAEAFPFLRNVLPGIGGCLHGAACTYDNSPDEDFIIDTLPGHENTLVITGLSGHGFKFAPVLGEIAADFALGKTPSFDLTPFRLSRFSQ</sequence>
<organism>
    <name type="scientific">Salmonella newport (strain SL254)</name>
    <dbReference type="NCBI Taxonomy" id="423368"/>
    <lineage>
        <taxon>Bacteria</taxon>
        <taxon>Pseudomonadati</taxon>
        <taxon>Pseudomonadota</taxon>
        <taxon>Gammaproteobacteria</taxon>
        <taxon>Enterobacterales</taxon>
        <taxon>Enterobacteriaceae</taxon>
        <taxon>Salmonella</taxon>
    </lineage>
</organism>
<feature type="chain" id="PRO_1000127448" description="N-methyl-L-tryptophan oxidase">
    <location>
        <begin position="1"/>
        <end position="372"/>
    </location>
</feature>
<feature type="binding site" evidence="1">
    <location>
        <begin position="4"/>
        <end position="34"/>
    </location>
    <ligand>
        <name>FAD</name>
        <dbReference type="ChEBI" id="CHEBI:57692"/>
    </ligand>
</feature>
<feature type="modified residue" description="S-8alpha-FAD cysteine" evidence="1">
    <location>
        <position position="307"/>
    </location>
</feature>
<reference key="1">
    <citation type="journal article" date="2011" name="J. Bacteriol.">
        <title>Comparative genomics of 28 Salmonella enterica isolates: evidence for CRISPR-mediated adaptive sublineage evolution.</title>
        <authorList>
            <person name="Fricke W.F."/>
            <person name="Mammel M.K."/>
            <person name="McDermott P.F."/>
            <person name="Tartera C."/>
            <person name="White D.G."/>
            <person name="Leclerc J.E."/>
            <person name="Ravel J."/>
            <person name="Cebula T.A."/>
        </authorList>
    </citation>
    <scope>NUCLEOTIDE SEQUENCE [LARGE SCALE GENOMIC DNA]</scope>
    <source>
        <strain>SL254</strain>
    </source>
</reference>
<evidence type="ECO:0000255" key="1">
    <source>
        <dbReference type="HAMAP-Rule" id="MF_00515"/>
    </source>
</evidence>